<keyword id="KW-0030">Aminoacyl-tRNA synthetase</keyword>
<keyword id="KW-0067">ATP-binding</keyword>
<keyword id="KW-0963">Cytoplasm</keyword>
<keyword id="KW-0436">Ligase</keyword>
<keyword id="KW-0479">Metal-binding</keyword>
<keyword id="KW-0547">Nucleotide-binding</keyword>
<keyword id="KW-0648">Protein biosynthesis</keyword>
<keyword id="KW-1185">Reference proteome</keyword>
<keyword id="KW-0694">RNA-binding</keyword>
<keyword id="KW-0820">tRNA-binding</keyword>
<keyword id="KW-0862">Zinc</keyword>
<feature type="chain" id="PRO_1000203928" description="Threonine--tRNA ligase">
    <location>
        <begin position="1"/>
        <end position="625"/>
    </location>
</feature>
<feature type="region of interest" description="Editing domain" evidence="1">
    <location>
        <begin position="1"/>
        <end position="147"/>
    </location>
</feature>
<feature type="region of interest" description="Catalytic" evidence="1">
    <location>
        <begin position="206"/>
        <end position="505"/>
    </location>
</feature>
<feature type="binding site" evidence="1">
    <location>
        <position position="298"/>
    </location>
    <ligand>
        <name>Zn(2+)</name>
        <dbReference type="ChEBI" id="CHEBI:29105"/>
    </ligand>
</feature>
<feature type="binding site" evidence="1">
    <location>
        <position position="350"/>
    </location>
    <ligand>
        <name>Zn(2+)</name>
        <dbReference type="ChEBI" id="CHEBI:29105"/>
    </ligand>
</feature>
<feature type="binding site" evidence="1">
    <location>
        <position position="474"/>
    </location>
    <ligand>
        <name>Zn(2+)</name>
        <dbReference type="ChEBI" id="CHEBI:29105"/>
    </ligand>
</feature>
<evidence type="ECO:0000255" key="1">
    <source>
        <dbReference type="HAMAP-Rule" id="MF_00184"/>
    </source>
</evidence>
<reference key="1">
    <citation type="journal article" date="2009" name="Appl. Environ. Microbiol.">
        <title>Metabolic versatility and indigenous origin of the archaeon Thermococcus sibiricus, isolated from a siberian oil reservoir, as revealed by genome analysis.</title>
        <authorList>
            <person name="Mardanov A.V."/>
            <person name="Ravin N.V."/>
            <person name="Svetlitchnyi V.A."/>
            <person name="Beletsky A.V."/>
            <person name="Miroshnichenko M.L."/>
            <person name="Bonch-Osmolovskaya E.A."/>
            <person name="Skryabin K.G."/>
        </authorList>
    </citation>
    <scope>NUCLEOTIDE SEQUENCE [LARGE SCALE GENOMIC DNA]</scope>
    <source>
        <strain>DSM 12597 / MM 739</strain>
    </source>
</reference>
<gene>
    <name evidence="1" type="primary">thrS</name>
    <name type="ordered locus">TSIB_0490</name>
</gene>
<protein>
    <recommendedName>
        <fullName evidence="1">Threonine--tRNA ligase</fullName>
        <ecNumber evidence="1">6.1.1.3</ecNumber>
    </recommendedName>
    <alternativeName>
        <fullName evidence="1">Threonyl-tRNA synthetase</fullName>
        <shortName evidence="1">ThrRS</shortName>
    </alternativeName>
</protein>
<comment type="function">
    <text evidence="1">Catalyzes the attachment of threonine to tRNA(Thr) in a two-step reaction: L-threonine is first activated by ATP to form Thr-AMP and then transferred to the acceptor end of tRNA(Thr). Also edits incorrectly charged L-seryl-tRNA(Thr).</text>
</comment>
<comment type="catalytic activity">
    <reaction evidence="1">
        <text>tRNA(Thr) + L-threonine + ATP = L-threonyl-tRNA(Thr) + AMP + diphosphate + H(+)</text>
        <dbReference type="Rhea" id="RHEA:24624"/>
        <dbReference type="Rhea" id="RHEA-COMP:9670"/>
        <dbReference type="Rhea" id="RHEA-COMP:9704"/>
        <dbReference type="ChEBI" id="CHEBI:15378"/>
        <dbReference type="ChEBI" id="CHEBI:30616"/>
        <dbReference type="ChEBI" id="CHEBI:33019"/>
        <dbReference type="ChEBI" id="CHEBI:57926"/>
        <dbReference type="ChEBI" id="CHEBI:78442"/>
        <dbReference type="ChEBI" id="CHEBI:78534"/>
        <dbReference type="ChEBI" id="CHEBI:456215"/>
        <dbReference type="EC" id="6.1.1.3"/>
    </reaction>
</comment>
<comment type="cofactor">
    <cofactor evidence="1">
        <name>Zn(2+)</name>
        <dbReference type="ChEBI" id="CHEBI:29105"/>
    </cofactor>
    <text evidence="1">Binds 1 zinc ion per subunit.</text>
</comment>
<comment type="subunit">
    <text evidence="1">Homodimer.</text>
</comment>
<comment type="subcellular location">
    <subcellularLocation>
        <location evidence="1">Cytoplasm</location>
    </subcellularLocation>
</comment>
<comment type="domain">
    <text evidence="1">The N-terminal domain is an archaea-specific tRNA-editing domain that hydrolyzes incorrectly charged L-seryl-tRNA(Thr). Catalysis of tRNA editing is performed by the charged tRNA itself.</text>
</comment>
<comment type="similarity">
    <text evidence="1">Belongs to the class-II aminoacyl-tRNA synthetase family.</text>
</comment>
<dbReference type="EC" id="6.1.1.3" evidence="1"/>
<dbReference type="EMBL" id="CP001463">
    <property type="protein sequence ID" value="ACS89556.1"/>
    <property type="molecule type" value="Genomic_DNA"/>
</dbReference>
<dbReference type="RefSeq" id="WP_015848776.1">
    <property type="nucleotide sequence ID" value="NC_012883.1"/>
</dbReference>
<dbReference type="SMR" id="C6A1R1"/>
<dbReference type="STRING" id="604354.TSIB_0490"/>
<dbReference type="GeneID" id="8095477"/>
<dbReference type="KEGG" id="tsi:TSIB_0490"/>
<dbReference type="eggNOG" id="arCOG00401">
    <property type="taxonomic scope" value="Archaea"/>
</dbReference>
<dbReference type="HOGENOM" id="CLU_029833_0_0_2"/>
<dbReference type="OrthoDB" id="372136at2157"/>
<dbReference type="Proteomes" id="UP000009079">
    <property type="component" value="Chromosome"/>
</dbReference>
<dbReference type="GO" id="GO:0005737">
    <property type="term" value="C:cytoplasm"/>
    <property type="evidence" value="ECO:0007669"/>
    <property type="project" value="UniProtKB-SubCell"/>
</dbReference>
<dbReference type="GO" id="GO:0005524">
    <property type="term" value="F:ATP binding"/>
    <property type="evidence" value="ECO:0007669"/>
    <property type="project" value="UniProtKB-UniRule"/>
</dbReference>
<dbReference type="GO" id="GO:0004829">
    <property type="term" value="F:threonine-tRNA ligase activity"/>
    <property type="evidence" value="ECO:0007669"/>
    <property type="project" value="UniProtKB-UniRule"/>
</dbReference>
<dbReference type="GO" id="GO:0000049">
    <property type="term" value="F:tRNA binding"/>
    <property type="evidence" value="ECO:0007669"/>
    <property type="project" value="UniProtKB-KW"/>
</dbReference>
<dbReference type="GO" id="GO:0008270">
    <property type="term" value="F:zinc ion binding"/>
    <property type="evidence" value="ECO:0007669"/>
    <property type="project" value="InterPro"/>
</dbReference>
<dbReference type="GO" id="GO:0006435">
    <property type="term" value="P:threonyl-tRNA aminoacylation"/>
    <property type="evidence" value="ECO:0007669"/>
    <property type="project" value="UniProtKB-UniRule"/>
</dbReference>
<dbReference type="CDD" id="cd00860">
    <property type="entry name" value="ThrRS_anticodon"/>
    <property type="match status" value="1"/>
</dbReference>
<dbReference type="FunFam" id="3.30.930.10:FF:000076">
    <property type="entry name" value="Threonine--tRNA ligase"/>
    <property type="match status" value="1"/>
</dbReference>
<dbReference type="FunFam" id="3.40.50.800:FF:000001">
    <property type="entry name" value="Threonine--tRNA ligase"/>
    <property type="match status" value="1"/>
</dbReference>
<dbReference type="FunFam" id="3.50.80.10:FF:000004">
    <property type="entry name" value="Threonine--tRNA ligase"/>
    <property type="match status" value="1"/>
</dbReference>
<dbReference type="Gene3D" id="3.40.50.800">
    <property type="entry name" value="Anticodon-binding domain"/>
    <property type="match status" value="1"/>
</dbReference>
<dbReference type="Gene3D" id="3.30.930.10">
    <property type="entry name" value="Bira Bifunctional Protein, Domain 2"/>
    <property type="match status" value="1"/>
</dbReference>
<dbReference type="Gene3D" id="3.50.80.10">
    <property type="entry name" value="D-tyrosyl-tRNA(Tyr) deacylase"/>
    <property type="match status" value="1"/>
</dbReference>
<dbReference type="HAMAP" id="MF_00184">
    <property type="entry name" value="Thr_tRNA_synth"/>
    <property type="match status" value="1"/>
</dbReference>
<dbReference type="InterPro" id="IPR002314">
    <property type="entry name" value="aa-tRNA-synt_IIb"/>
</dbReference>
<dbReference type="InterPro" id="IPR006195">
    <property type="entry name" value="aa-tRNA-synth_II"/>
</dbReference>
<dbReference type="InterPro" id="IPR045864">
    <property type="entry name" value="aa-tRNA-synth_II/BPL/LPL"/>
</dbReference>
<dbReference type="InterPro" id="IPR004154">
    <property type="entry name" value="Anticodon-bd"/>
</dbReference>
<dbReference type="InterPro" id="IPR036621">
    <property type="entry name" value="Anticodon-bd_dom_sf"/>
</dbReference>
<dbReference type="InterPro" id="IPR023509">
    <property type="entry name" value="DTD-like_sf"/>
</dbReference>
<dbReference type="InterPro" id="IPR002320">
    <property type="entry name" value="Thr-tRNA-ligase_IIa"/>
</dbReference>
<dbReference type="InterPro" id="IPR015011">
    <property type="entry name" value="Threonyl-tRNA_syn_edit_dom_arc"/>
</dbReference>
<dbReference type="InterPro" id="IPR047246">
    <property type="entry name" value="ThrRS_anticodon"/>
</dbReference>
<dbReference type="NCBIfam" id="NF003068">
    <property type="entry name" value="PRK03991.1"/>
    <property type="match status" value="1"/>
</dbReference>
<dbReference type="NCBIfam" id="TIGR00418">
    <property type="entry name" value="thrS"/>
    <property type="match status" value="1"/>
</dbReference>
<dbReference type="PANTHER" id="PTHR11451:SF44">
    <property type="entry name" value="THREONINE--TRNA LIGASE, CHLOROPLASTIC_MITOCHONDRIAL 2"/>
    <property type="match status" value="1"/>
</dbReference>
<dbReference type="PANTHER" id="PTHR11451">
    <property type="entry name" value="THREONINE-TRNA LIGASE"/>
    <property type="match status" value="1"/>
</dbReference>
<dbReference type="Pfam" id="PF03129">
    <property type="entry name" value="HGTP_anticodon"/>
    <property type="match status" value="1"/>
</dbReference>
<dbReference type="Pfam" id="PF00587">
    <property type="entry name" value="tRNA-synt_2b"/>
    <property type="match status" value="1"/>
</dbReference>
<dbReference type="Pfam" id="PF08915">
    <property type="entry name" value="tRNA-Thr_ED"/>
    <property type="match status" value="1"/>
</dbReference>
<dbReference type="PRINTS" id="PR01047">
    <property type="entry name" value="TRNASYNTHTHR"/>
</dbReference>
<dbReference type="SUPFAM" id="SSF52954">
    <property type="entry name" value="Class II aaRS ABD-related"/>
    <property type="match status" value="1"/>
</dbReference>
<dbReference type="SUPFAM" id="SSF55681">
    <property type="entry name" value="Class II aaRS and biotin synthetases"/>
    <property type="match status" value="1"/>
</dbReference>
<dbReference type="PROSITE" id="PS50862">
    <property type="entry name" value="AA_TRNA_LIGASE_II"/>
    <property type="match status" value="1"/>
</dbReference>
<proteinExistence type="inferred from homology"/>
<name>SYT_THESM</name>
<organism>
    <name type="scientific">Thermococcus sibiricus (strain DSM 12597 / MM 739)</name>
    <dbReference type="NCBI Taxonomy" id="604354"/>
    <lineage>
        <taxon>Archaea</taxon>
        <taxon>Methanobacteriati</taxon>
        <taxon>Methanobacteriota</taxon>
        <taxon>Thermococci</taxon>
        <taxon>Thermococcales</taxon>
        <taxon>Thermococcaceae</taxon>
        <taxon>Thermococcus</taxon>
    </lineage>
</organism>
<sequence>MRILLIHSDYLEYEVKDKALKKPEEISENQKKGRLDEVLAVFMSVEKVDEQNPEEIVKKAVKEIEEVVSQVKTNNIFVYPFAHLSSELGSPDVALRILKEIENELKNKGYNVRRAPFGYYKAFKLSCKGHPLAELSRTIVPGEAKKEEEVPEALKKEEELVSYWYILTPEGELVEVDKFDFSGYENLKKFANYEINKSRLVTEEPPHVKIMLEQELVDYEEGSDPGNLRYYPKGRLIKSLLENYVTDKVIEYGAMEVETPIMYDFEHPALEKYLNRFPARQYVVKSGDKRFFLRFAACFGQFLIKKDATISYRHLPLRMYELTRYSFRREKRGELSGLRRLRAFTMPDMHTVAKNLQQAMEEFKKQYKLSMEVLKGVGLTPEDYEVAIRFTEDFWNENKDFIVDLAGIIGKPVLIEMWKQRFFYFILKFEFNFVDNLDKAAALSTVQIDVENSQRFGITYYDEEGQEKYPLLLHCSPSGAIERVMYAILEKQAKIMKKGKKPMYPLWLSPIQVRIIPVSEKYLDYALYIAGKLEGAKIRADVDDRNERLNKKIREAEKEWIPYIIVVGENEKRMGVITVRKREDNKQYEIQVEDLIKEIRQKTEGFPYKPRPLPPLVSMRPKFRG</sequence>
<accession>C6A1R1</accession>